<accession>B5FR66</accession>
<keyword id="KW-0004">4Fe-4S</keyword>
<keyword id="KW-0963">Cytoplasm</keyword>
<keyword id="KW-1015">Disulfide bond</keyword>
<keyword id="KW-0408">Iron</keyword>
<keyword id="KW-0411">Iron-sulfur</keyword>
<keyword id="KW-0479">Metal-binding</keyword>
<keyword id="KW-0489">Methyltransferase</keyword>
<keyword id="KW-0698">rRNA processing</keyword>
<keyword id="KW-0949">S-adenosyl-L-methionine</keyword>
<keyword id="KW-0808">Transferase</keyword>
<keyword id="KW-0819">tRNA processing</keyword>
<organism>
    <name type="scientific">Salmonella dublin (strain CT_02021853)</name>
    <dbReference type="NCBI Taxonomy" id="439851"/>
    <lineage>
        <taxon>Bacteria</taxon>
        <taxon>Pseudomonadati</taxon>
        <taxon>Pseudomonadota</taxon>
        <taxon>Gammaproteobacteria</taxon>
        <taxon>Enterobacterales</taxon>
        <taxon>Enterobacteriaceae</taxon>
        <taxon>Salmonella</taxon>
    </lineage>
</organism>
<gene>
    <name evidence="1" type="primary">rlmN</name>
    <name type="ordered locus">SeD_A2895</name>
</gene>
<protein>
    <recommendedName>
        <fullName evidence="1">Dual-specificity RNA methyltransferase RlmN</fullName>
        <ecNumber evidence="1">2.1.1.192</ecNumber>
    </recommendedName>
    <alternativeName>
        <fullName evidence="1">23S rRNA (adenine(2503)-C(2))-methyltransferase</fullName>
    </alternativeName>
    <alternativeName>
        <fullName evidence="1">23S rRNA m2A2503 methyltransferase</fullName>
    </alternativeName>
    <alternativeName>
        <fullName evidence="1">Ribosomal RNA large subunit methyltransferase N</fullName>
    </alternativeName>
    <alternativeName>
        <fullName evidence="1">tRNA (adenine(37)-C(2))-methyltransferase</fullName>
    </alternativeName>
    <alternativeName>
        <fullName evidence="1">tRNA m2A37 methyltransferase</fullName>
    </alternativeName>
</protein>
<dbReference type="EC" id="2.1.1.192" evidence="1"/>
<dbReference type="EMBL" id="CP001144">
    <property type="protein sequence ID" value="ACH76855.1"/>
    <property type="molecule type" value="Genomic_DNA"/>
</dbReference>
<dbReference type="RefSeq" id="WP_000003206.1">
    <property type="nucleotide sequence ID" value="NC_011205.1"/>
</dbReference>
<dbReference type="SMR" id="B5FR66"/>
<dbReference type="KEGG" id="sed:SeD_A2895"/>
<dbReference type="HOGENOM" id="CLU_029101_0_0_6"/>
<dbReference type="Proteomes" id="UP000008322">
    <property type="component" value="Chromosome"/>
</dbReference>
<dbReference type="GO" id="GO:0005737">
    <property type="term" value="C:cytoplasm"/>
    <property type="evidence" value="ECO:0007669"/>
    <property type="project" value="UniProtKB-SubCell"/>
</dbReference>
<dbReference type="GO" id="GO:0051539">
    <property type="term" value="F:4 iron, 4 sulfur cluster binding"/>
    <property type="evidence" value="ECO:0007669"/>
    <property type="project" value="UniProtKB-UniRule"/>
</dbReference>
<dbReference type="GO" id="GO:0046872">
    <property type="term" value="F:metal ion binding"/>
    <property type="evidence" value="ECO:0007669"/>
    <property type="project" value="UniProtKB-KW"/>
</dbReference>
<dbReference type="GO" id="GO:0070040">
    <property type="term" value="F:rRNA (adenine(2503)-C2-)-methyltransferase activity"/>
    <property type="evidence" value="ECO:0007669"/>
    <property type="project" value="UniProtKB-UniRule"/>
</dbReference>
<dbReference type="GO" id="GO:0019843">
    <property type="term" value="F:rRNA binding"/>
    <property type="evidence" value="ECO:0007669"/>
    <property type="project" value="UniProtKB-UniRule"/>
</dbReference>
<dbReference type="GO" id="GO:0002935">
    <property type="term" value="F:tRNA (adenine(37)-C2)-methyltransferase activity"/>
    <property type="evidence" value="ECO:0007669"/>
    <property type="project" value="UniProtKB-UniRule"/>
</dbReference>
<dbReference type="GO" id="GO:0000049">
    <property type="term" value="F:tRNA binding"/>
    <property type="evidence" value="ECO:0007669"/>
    <property type="project" value="UniProtKB-UniRule"/>
</dbReference>
<dbReference type="GO" id="GO:0070475">
    <property type="term" value="P:rRNA base methylation"/>
    <property type="evidence" value="ECO:0007669"/>
    <property type="project" value="UniProtKB-UniRule"/>
</dbReference>
<dbReference type="GO" id="GO:0030488">
    <property type="term" value="P:tRNA methylation"/>
    <property type="evidence" value="ECO:0007669"/>
    <property type="project" value="UniProtKB-UniRule"/>
</dbReference>
<dbReference type="CDD" id="cd01335">
    <property type="entry name" value="Radical_SAM"/>
    <property type="match status" value="1"/>
</dbReference>
<dbReference type="FunFam" id="1.10.150.530:FF:000001">
    <property type="entry name" value="Dual-specificity RNA methyltransferase RlmN"/>
    <property type="match status" value="1"/>
</dbReference>
<dbReference type="FunFam" id="3.20.20.70:FF:000008">
    <property type="entry name" value="Dual-specificity RNA methyltransferase RlmN"/>
    <property type="match status" value="1"/>
</dbReference>
<dbReference type="Gene3D" id="1.10.150.530">
    <property type="match status" value="1"/>
</dbReference>
<dbReference type="Gene3D" id="3.20.20.70">
    <property type="entry name" value="Aldolase class I"/>
    <property type="match status" value="1"/>
</dbReference>
<dbReference type="HAMAP" id="MF_01849">
    <property type="entry name" value="RNA_methyltr_RlmN"/>
    <property type="match status" value="1"/>
</dbReference>
<dbReference type="InterPro" id="IPR013785">
    <property type="entry name" value="Aldolase_TIM"/>
</dbReference>
<dbReference type="InterPro" id="IPR040072">
    <property type="entry name" value="Methyltransferase_A"/>
</dbReference>
<dbReference type="InterPro" id="IPR048641">
    <property type="entry name" value="RlmN_N"/>
</dbReference>
<dbReference type="InterPro" id="IPR027492">
    <property type="entry name" value="RNA_MTrfase_RlmN"/>
</dbReference>
<dbReference type="InterPro" id="IPR004383">
    <property type="entry name" value="rRNA_lsu_MTrfase_RlmN/Cfr"/>
</dbReference>
<dbReference type="InterPro" id="IPR007197">
    <property type="entry name" value="rSAM"/>
</dbReference>
<dbReference type="NCBIfam" id="NF008396">
    <property type="entry name" value="PRK11194.1"/>
    <property type="match status" value="1"/>
</dbReference>
<dbReference type="NCBIfam" id="TIGR00048">
    <property type="entry name" value="rRNA_mod_RlmN"/>
    <property type="match status" value="1"/>
</dbReference>
<dbReference type="PANTHER" id="PTHR30544">
    <property type="entry name" value="23S RRNA METHYLTRANSFERASE"/>
    <property type="match status" value="1"/>
</dbReference>
<dbReference type="PANTHER" id="PTHR30544:SF5">
    <property type="entry name" value="RADICAL SAM CORE DOMAIN-CONTAINING PROTEIN"/>
    <property type="match status" value="1"/>
</dbReference>
<dbReference type="Pfam" id="PF04055">
    <property type="entry name" value="Radical_SAM"/>
    <property type="match status" value="1"/>
</dbReference>
<dbReference type="Pfam" id="PF21016">
    <property type="entry name" value="RlmN_N"/>
    <property type="match status" value="1"/>
</dbReference>
<dbReference type="PIRSF" id="PIRSF006004">
    <property type="entry name" value="CHP00048"/>
    <property type="match status" value="1"/>
</dbReference>
<dbReference type="SFLD" id="SFLDF00275">
    <property type="entry name" value="adenosine_C2_methyltransferase"/>
    <property type="match status" value="1"/>
</dbReference>
<dbReference type="SFLD" id="SFLDS00029">
    <property type="entry name" value="Radical_SAM"/>
    <property type="match status" value="1"/>
</dbReference>
<dbReference type="SUPFAM" id="SSF102114">
    <property type="entry name" value="Radical SAM enzymes"/>
    <property type="match status" value="1"/>
</dbReference>
<dbReference type="PROSITE" id="PS51918">
    <property type="entry name" value="RADICAL_SAM"/>
    <property type="match status" value="1"/>
</dbReference>
<name>RLMN_SALDC</name>
<sequence>MSEQIVTPESSTPVVLNNETKINLLDLNRQQMREFFKNLGEKPFRADQVMKWMYHYCCDNFDEMTDINKVLRGKLKEVAEIRAPEVVEEQRSSDGTIKWAIAVGDQRVETVYIPEDDRATLCVSSQVGCALECKFCSTAQQGFNRNLRVSEIIGQVWRAAKIVGAAKVTGQRPITNVVMMGMGEPLLNLTNVVPAMEIMLDDFGFGLSKRRVTLSTSGVVPALDKLGDMIDVALAISLHAPNDTIRDEIVPINKKYNIETFLGAVRRYLEKSNANQGRVTIEYVMLDHVNDGTEHAHQLAELLKETPCKINLIPWNPFPGAPYGRSSNSRIDRFSKVLMSYGFTTIVRKTRGDDIDAACGQLAGDVIDRTKRTLRKRMQGEVIDIKAI</sequence>
<proteinExistence type="inferred from homology"/>
<comment type="function">
    <text evidence="1">Specifically methylates position 2 of adenine 2503 in 23S rRNA and position 2 of adenine 37 in tRNAs. m2A2503 modification seems to play a crucial role in the proofreading step occurring at the peptidyl transferase center and thus would serve to optimize ribosomal fidelity.</text>
</comment>
<comment type="catalytic activity">
    <reaction evidence="1">
        <text>adenosine(2503) in 23S rRNA + 2 reduced [2Fe-2S]-[ferredoxin] + 2 S-adenosyl-L-methionine = 2-methyladenosine(2503) in 23S rRNA + 5'-deoxyadenosine + L-methionine + 2 oxidized [2Fe-2S]-[ferredoxin] + S-adenosyl-L-homocysteine</text>
        <dbReference type="Rhea" id="RHEA:42916"/>
        <dbReference type="Rhea" id="RHEA-COMP:10000"/>
        <dbReference type="Rhea" id="RHEA-COMP:10001"/>
        <dbReference type="Rhea" id="RHEA-COMP:10152"/>
        <dbReference type="Rhea" id="RHEA-COMP:10282"/>
        <dbReference type="ChEBI" id="CHEBI:17319"/>
        <dbReference type="ChEBI" id="CHEBI:33737"/>
        <dbReference type="ChEBI" id="CHEBI:33738"/>
        <dbReference type="ChEBI" id="CHEBI:57844"/>
        <dbReference type="ChEBI" id="CHEBI:57856"/>
        <dbReference type="ChEBI" id="CHEBI:59789"/>
        <dbReference type="ChEBI" id="CHEBI:74411"/>
        <dbReference type="ChEBI" id="CHEBI:74497"/>
        <dbReference type="EC" id="2.1.1.192"/>
    </reaction>
</comment>
<comment type="catalytic activity">
    <reaction evidence="1">
        <text>adenosine(37) in tRNA + 2 reduced [2Fe-2S]-[ferredoxin] + 2 S-adenosyl-L-methionine = 2-methyladenosine(37) in tRNA + 5'-deoxyadenosine + L-methionine + 2 oxidized [2Fe-2S]-[ferredoxin] + S-adenosyl-L-homocysteine</text>
        <dbReference type="Rhea" id="RHEA:43332"/>
        <dbReference type="Rhea" id="RHEA-COMP:10000"/>
        <dbReference type="Rhea" id="RHEA-COMP:10001"/>
        <dbReference type="Rhea" id="RHEA-COMP:10162"/>
        <dbReference type="Rhea" id="RHEA-COMP:10485"/>
        <dbReference type="ChEBI" id="CHEBI:17319"/>
        <dbReference type="ChEBI" id="CHEBI:33737"/>
        <dbReference type="ChEBI" id="CHEBI:33738"/>
        <dbReference type="ChEBI" id="CHEBI:57844"/>
        <dbReference type="ChEBI" id="CHEBI:57856"/>
        <dbReference type="ChEBI" id="CHEBI:59789"/>
        <dbReference type="ChEBI" id="CHEBI:74411"/>
        <dbReference type="ChEBI" id="CHEBI:74497"/>
        <dbReference type="EC" id="2.1.1.192"/>
    </reaction>
</comment>
<comment type="cofactor">
    <cofactor evidence="1">
        <name>[4Fe-4S] cluster</name>
        <dbReference type="ChEBI" id="CHEBI:49883"/>
    </cofactor>
    <text evidence="1">Binds 1 [4Fe-4S] cluster. The cluster is coordinated with 3 cysteines and an exchangeable S-adenosyl-L-methionine.</text>
</comment>
<comment type="subcellular location">
    <subcellularLocation>
        <location evidence="1">Cytoplasm</location>
    </subcellularLocation>
</comment>
<comment type="miscellaneous">
    <text evidence="1">Reaction proceeds by a ping-pong mechanism involving intermediate methylation of a conserved cysteine residue.</text>
</comment>
<comment type="similarity">
    <text evidence="1">Belongs to the radical SAM superfamily. RlmN family.</text>
</comment>
<evidence type="ECO:0000255" key="1">
    <source>
        <dbReference type="HAMAP-Rule" id="MF_01849"/>
    </source>
</evidence>
<evidence type="ECO:0000255" key="2">
    <source>
        <dbReference type="PROSITE-ProRule" id="PRU01266"/>
    </source>
</evidence>
<reference key="1">
    <citation type="journal article" date="2011" name="J. Bacteriol.">
        <title>Comparative genomics of 28 Salmonella enterica isolates: evidence for CRISPR-mediated adaptive sublineage evolution.</title>
        <authorList>
            <person name="Fricke W.F."/>
            <person name="Mammel M.K."/>
            <person name="McDermott P.F."/>
            <person name="Tartera C."/>
            <person name="White D.G."/>
            <person name="Leclerc J.E."/>
            <person name="Ravel J."/>
            <person name="Cebula T.A."/>
        </authorList>
    </citation>
    <scope>NUCLEOTIDE SEQUENCE [LARGE SCALE GENOMIC DNA]</scope>
    <source>
        <strain>CT_02021853</strain>
    </source>
</reference>
<feature type="chain" id="PRO_1000188598" description="Dual-specificity RNA methyltransferase RlmN">
    <location>
        <begin position="1"/>
        <end position="388"/>
    </location>
</feature>
<feature type="domain" description="Radical SAM core" evidence="2">
    <location>
        <begin position="115"/>
        <end position="354"/>
    </location>
</feature>
<feature type="active site" description="Proton acceptor" evidence="1">
    <location>
        <position position="109"/>
    </location>
</feature>
<feature type="active site" description="S-methylcysteine intermediate" evidence="1">
    <location>
        <position position="359"/>
    </location>
</feature>
<feature type="binding site" evidence="1">
    <location>
        <position position="129"/>
    </location>
    <ligand>
        <name>[4Fe-4S] cluster</name>
        <dbReference type="ChEBI" id="CHEBI:49883"/>
        <note>4Fe-4S-S-AdoMet</note>
    </ligand>
</feature>
<feature type="binding site" evidence="1">
    <location>
        <position position="133"/>
    </location>
    <ligand>
        <name>[4Fe-4S] cluster</name>
        <dbReference type="ChEBI" id="CHEBI:49883"/>
        <note>4Fe-4S-S-AdoMet</note>
    </ligand>
</feature>
<feature type="binding site" evidence="1">
    <location>
        <position position="136"/>
    </location>
    <ligand>
        <name>[4Fe-4S] cluster</name>
        <dbReference type="ChEBI" id="CHEBI:49883"/>
        <note>4Fe-4S-S-AdoMet</note>
    </ligand>
</feature>
<feature type="binding site" evidence="1">
    <location>
        <begin position="183"/>
        <end position="184"/>
    </location>
    <ligand>
        <name>S-adenosyl-L-methionine</name>
        <dbReference type="ChEBI" id="CHEBI:59789"/>
    </ligand>
</feature>
<feature type="binding site" evidence="1">
    <location>
        <position position="215"/>
    </location>
    <ligand>
        <name>S-adenosyl-L-methionine</name>
        <dbReference type="ChEBI" id="CHEBI:59789"/>
    </ligand>
</feature>
<feature type="binding site" evidence="1">
    <location>
        <begin position="237"/>
        <end position="239"/>
    </location>
    <ligand>
        <name>S-adenosyl-L-methionine</name>
        <dbReference type="ChEBI" id="CHEBI:59789"/>
    </ligand>
</feature>
<feature type="binding site" evidence="1">
    <location>
        <position position="316"/>
    </location>
    <ligand>
        <name>S-adenosyl-L-methionine</name>
        <dbReference type="ChEBI" id="CHEBI:59789"/>
    </ligand>
</feature>
<feature type="disulfide bond" description="(transient)" evidence="1">
    <location>
        <begin position="122"/>
        <end position="359"/>
    </location>
</feature>